<gene>
    <name type="primary">LSM2</name>
    <name type="synonym">SMX5</name>
    <name type="synonym">SNP3</name>
    <name type="ordered locus">YBL026W</name>
    <name type="ORF">YBL0425</name>
</gene>
<keyword id="KW-0002">3D-structure</keyword>
<keyword id="KW-0963">Cytoplasm</keyword>
<keyword id="KW-0507">mRNA processing</keyword>
<keyword id="KW-0508">mRNA splicing</keyword>
<keyword id="KW-0539">Nucleus</keyword>
<keyword id="KW-1185">Reference proteome</keyword>
<keyword id="KW-0687">Ribonucleoprotein</keyword>
<keyword id="KW-0694">RNA-binding</keyword>
<keyword id="KW-0698">rRNA processing</keyword>
<keyword id="KW-0747">Spliceosome</keyword>
<keyword id="KW-0819">tRNA processing</keyword>
<reference key="1">
    <citation type="journal article" date="1994" name="Yeast">
        <title>Analysis of a 17.4 kb DNA segment of yeast chromosome II encompassing the ribosomal protein L19 as well as proteins with homologies to components of the hnRNP and snRNP complexes and to the human proliferation-associated p120 antigen.</title>
        <authorList>
            <person name="van Dyck L."/>
            <person name="Jonniaux J.-L."/>
            <person name="Barreiros T.D.M."/>
            <person name="Kleine K."/>
            <person name="Goffeau A."/>
        </authorList>
    </citation>
    <scope>NUCLEOTIDE SEQUENCE [GENOMIC DNA]</scope>
    <source>
        <strain>ATCC 204508 / S288c</strain>
    </source>
</reference>
<reference key="2">
    <citation type="journal article" date="1994" name="EMBO J.">
        <title>Complete DNA sequence of yeast chromosome II.</title>
        <authorList>
            <person name="Feldmann H."/>
            <person name="Aigle M."/>
            <person name="Aljinovic G."/>
            <person name="Andre B."/>
            <person name="Baclet M.C."/>
            <person name="Barthe C."/>
            <person name="Baur A."/>
            <person name="Becam A.-M."/>
            <person name="Biteau N."/>
            <person name="Boles E."/>
            <person name="Brandt T."/>
            <person name="Brendel M."/>
            <person name="Brueckner M."/>
            <person name="Bussereau F."/>
            <person name="Christiansen C."/>
            <person name="Contreras R."/>
            <person name="Crouzet M."/>
            <person name="Cziepluch C."/>
            <person name="Demolis N."/>
            <person name="Delaveau T."/>
            <person name="Doignon F."/>
            <person name="Domdey H."/>
            <person name="Duesterhus S."/>
            <person name="Dubois E."/>
            <person name="Dujon B."/>
            <person name="El Bakkoury M."/>
            <person name="Entian K.-D."/>
            <person name="Feuermann M."/>
            <person name="Fiers W."/>
            <person name="Fobo G.M."/>
            <person name="Fritz C."/>
            <person name="Gassenhuber J."/>
            <person name="Glansdorff N."/>
            <person name="Goffeau A."/>
            <person name="Grivell L.A."/>
            <person name="de Haan M."/>
            <person name="Hein C."/>
            <person name="Herbert C.J."/>
            <person name="Hollenberg C.P."/>
            <person name="Holmstroem K."/>
            <person name="Jacq C."/>
            <person name="Jacquet M."/>
            <person name="Jauniaux J.-C."/>
            <person name="Jonniaux J.-L."/>
            <person name="Kallesoee T."/>
            <person name="Kiesau P."/>
            <person name="Kirchrath L."/>
            <person name="Koetter P."/>
            <person name="Korol S."/>
            <person name="Liebl S."/>
            <person name="Logghe M."/>
            <person name="Lohan A.J.E."/>
            <person name="Louis E.J."/>
            <person name="Li Z.Y."/>
            <person name="Maat M.J."/>
            <person name="Mallet L."/>
            <person name="Mannhaupt G."/>
            <person name="Messenguy F."/>
            <person name="Miosga T."/>
            <person name="Molemans F."/>
            <person name="Mueller S."/>
            <person name="Nasr F."/>
            <person name="Obermaier B."/>
            <person name="Perea J."/>
            <person name="Pierard A."/>
            <person name="Piravandi E."/>
            <person name="Pohl F.M."/>
            <person name="Pohl T.M."/>
            <person name="Potier S."/>
            <person name="Proft M."/>
            <person name="Purnelle B."/>
            <person name="Ramezani Rad M."/>
            <person name="Rieger M."/>
            <person name="Rose M."/>
            <person name="Schaaff-Gerstenschlaeger I."/>
            <person name="Scherens B."/>
            <person name="Schwarzlose C."/>
            <person name="Skala J."/>
            <person name="Slonimski P.P."/>
            <person name="Smits P.H.M."/>
            <person name="Souciet J.-L."/>
            <person name="Steensma H.Y."/>
            <person name="Stucka R."/>
            <person name="Urrestarazu L.A."/>
            <person name="van der Aart Q.J.M."/>
            <person name="Van Dyck L."/>
            <person name="Vassarotti A."/>
            <person name="Vetter I."/>
            <person name="Vierendeels F."/>
            <person name="Vissers S."/>
            <person name="Wagner G."/>
            <person name="de Wergifosse P."/>
            <person name="Wolfe K.H."/>
            <person name="Zagulski M."/>
            <person name="Zimmermann F.K."/>
            <person name="Mewes H.-W."/>
            <person name="Kleine K."/>
        </authorList>
    </citation>
    <scope>NUCLEOTIDE SEQUENCE [LARGE SCALE GENOMIC DNA]</scope>
    <source>
        <strain>ATCC 204508 / S288c</strain>
    </source>
</reference>
<reference key="3">
    <citation type="journal article" date="2014" name="G3 (Bethesda)">
        <title>The reference genome sequence of Saccharomyces cerevisiae: Then and now.</title>
        <authorList>
            <person name="Engel S.R."/>
            <person name="Dietrich F.S."/>
            <person name="Fisk D.G."/>
            <person name="Binkley G."/>
            <person name="Balakrishnan R."/>
            <person name="Costanzo M.C."/>
            <person name="Dwight S.S."/>
            <person name="Hitz B.C."/>
            <person name="Karra K."/>
            <person name="Nash R.S."/>
            <person name="Weng S."/>
            <person name="Wong E.D."/>
            <person name="Lloyd P."/>
            <person name="Skrzypek M.S."/>
            <person name="Miyasato S.R."/>
            <person name="Simison M."/>
            <person name="Cherry J.M."/>
        </authorList>
    </citation>
    <scope>GENOME REANNOTATION</scope>
    <source>
        <strain>ATCC 204508 / S288c</strain>
    </source>
</reference>
<reference key="4">
    <citation type="journal article" date="1999" name="EMBO J.">
        <title>Sm and Sm-like proteins assemble in two related complexes of deep evolutionary origin.</title>
        <authorList>
            <person name="Salgado-Garrido J."/>
            <person name="Bragado-Nilsson E."/>
            <person name="Kandels-Lewis S."/>
            <person name="Seraphin B."/>
        </authorList>
    </citation>
    <scope>FUNCTION</scope>
    <scope>IDENTIFICATION IN THE LSM2-LSM8 COMPLEX</scope>
    <scope>ASSOCIATION WITH PRE-P RNA</scope>
</reference>
<reference key="5">
    <citation type="journal article" date="1999" name="EMBO J.">
        <title>Characterization of Sm-like proteins in yeast and their association with U6 snRNA.</title>
        <authorList>
            <person name="Mayes A.E."/>
            <person name="Verdone L."/>
            <person name="Legrain P."/>
            <person name="Beggs J.D."/>
        </authorList>
    </citation>
    <scope>CHARACTERIZATION</scope>
</reference>
<reference key="6">
    <citation type="journal article" date="1999" name="EMBO J.">
        <title>Identification by mass spectrometry and functional analysis of novel proteins of the yeast [U4/U6.U5] tri-snRNP.</title>
        <authorList>
            <person name="Gottschalk A."/>
            <person name="Neubauer G."/>
            <person name="Banroques J."/>
            <person name="Mann M."/>
            <person name="Luehrmann R."/>
            <person name="Fabrizio P."/>
        </authorList>
    </citation>
    <scope>SUBUNIT</scope>
    <scope>IDENTIFICATION IN THE U4/U5/U6 TRI-SNRNP COMPLEX</scope>
    <scope>IDENTIFICATION BY MASS SPECTROMETRY</scope>
</reference>
<reference key="7">
    <citation type="journal article" date="2000" name="EMBO J.">
        <title>A Sm-like protein complex that participates in mRNA degradation.</title>
        <authorList>
            <person name="Bouveret E."/>
            <person name="Rigaut G."/>
            <person name="Shevchenko A."/>
            <person name="Wilm M."/>
            <person name="Seraphin B."/>
        </authorList>
    </citation>
    <scope>IDENTIFICATION IN THE LSM1-LSM7 COMPLEX</scope>
    <scope>ASSOCIATION OF THE LSM1-LSM7 COMPLEX WITH PAT1 AND XRN1</scope>
    <scope>FUNCTION OF THE LSM1-LSM7 COMPLEX</scope>
    <scope>IDENTIFICATION IN THE LSM2-LSM8 COMPLEX</scope>
    <scope>ASSOCIATION OF THE LSM2-LSM8 COMPLEX WITH U6 SNRNA</scope>
    <scope>IDENTIFICATION BY MASS SPECTROMETRY</scope>
</reference>
<reference key="8">
    <citation type="journal article" date="2002" name="Mol. Cell. Biol.">
        <title>Lsm proteins are required for normal processing of pre-tRNAs and their efficient association with La-homologous protein Lhp1p.</title>
        <authorList>
            <person name="Kufel J."/>
            <person name="Allmang C."/>
            <person name="Verdone L."/>
            <person name="Beggs J.D."/>
            <person name="Tollervey D."/>
        </authorList>
    </citation>
    <scope>FUNCTION IN PROCESSING OF PRE-TRNAS</scope>
</reference>
<reference key="9">
    <citation type="journal article" date="2003" name="J. Biol. Chem.">
        <title>Lsm Proteins are required for normal processing and stability of ribosomal RNAs.</title>
        <authorList>
            <person name="Kufel J."/>
            <person name="Allmang C."/>
            <person name="Petfalski E."/>
            <person name="Beggs J.D."/>
            <person name="Tollervey D."/>
        </authorList>
    </citation>
    <scope>FUNCTION IN PROCESSING OF PRE-RRNAS</scope>
</reference>
<reference key="10">
    <citation type="journal article" date="2003" name="Nature">
        <title>Global analysis of protein expression in yeast.</title>
        <authorList>
            <person name="Ghaemmaghami S."/>
            <person name="Huh W.-K."/>
            <person name="Bower K."/>
            <person name="Howson R.W."/>
            <person name="Belle A."/>
            <person name="Dephoure N."/>
            <person name="O'Shea E.K."/>
            <person name="Weissman J.S."/>
        </authorList>
    </citation>
    <scope>LEVEL OF PROTEIN EXPRESSION [LARGE SCALE ANALYSIS]</scope>
</reference>
<reference key="11">
    <citation type="journal article" date="2003" name="Nucleic Acids Res.">
        <title>A complex pathway for 3' processing of the yeast U3 snoRNA.</title>
        <authorList>
            <person name="Kufel J."/>
            <person name="Allmang C."/>
            <person name="Verdone L."/>
            <person name="Beggs J."/>
            <person name="Tollervey D."/>
        </authorList>
    </citation>
    <scope>FUNCTION IN PROCESSING OF U3 SNORNA</scope>
</reference>
<reference key="12">
    <citation type="journal article" date="2004" name="Mol. Biol. Cell">
        <title>An Lsm2-Lsm7 complex in Saccharomyces cerevisiae associates with the small nucleolar RNA snR5.</title>
        <authorList>
            <person name="Fernandez C.F."/>
            <person name="Pannone B.K."/>
            <person name="Chen X."/>
            <person name="Fuchs G."/>
            <person name="Wolin S.L."/>
        </authorList>
    </citation>
    <scope>FUNCTION</scope>
    <scope>IDENTIFICATION IN THE LSM2-LSM7 COMPLEX</scope>
    <scope>SUBCELLULAR LOCATION</scope>
</reference>
<reference key="13">
    <citation type="journal article" date="2004" name="Mol. Cell. Biol.">
        <title>Nuclear pre-mRNA decapping and 5' degradation in yeast require the Lsm2-8p complex.</title>
        <authorList>
            <person name="Kufel J."/>
            <person name="Bousquet-Antonelli C."/>
            <person name="Beggs J.D."/>
            <person name="Tollervey D."/>
        </authorList>
    </citation>
    <scope>FUNCTION OF THE LSM2-LSM8 COMPLEX IN NUCLEAR MRNA DEGRADATION</scope>
</reference>
<reference key="14">
    <citation type="journal article" date="2018" name="PLoS Genet.">
        <title>The Lsm1-7/Pat1 complex binds to stress-activated mRNAs and modulates the response to hyperosmotic shock.</title>
        <authorList>
            <person name="Garre E."/>
            <person name="Pelechano V."/>
            <person name="Sanchez Del Pino M."/>
            <person name="Alepuz P."/>
            <person name="Sunnerhagen P."/>
        </authorList>
    </citation>
    <scope>FUNCTION</scope>
</reference>
<reference key="15">
    <citation type="journal article" date="2013" name="Cell Rep.">
        <title>Architecture of the Lsm1-7-Pat1 complex: a conserved assembly in eukaryotic mRNA turnover.</title>
        <authorList>
            <person name="Sharif H."/>
            <person name="Conti E."/>
        </authorList>
    </citation>
    <scope>X-RAY CRYSTALLOGRAPHY (2.30 ANGSTROMS) OF 27-172 OF LSM1-LSM7 COMPLEX</scope>
    <scope>SUBUNIT</scope>
    <scope>INTERACTION WITH PAT1</scope>
</reference>
<reference key="16">
    <citation type="journal article" date="2014" name="Cell Res.">
        <title>Crystal structure and biochemical analysis of the heptameric Lsm1-7 complex.</title>
        <authorList>
            <person name="Zhou L."/>
            <person name="Zhou Y."/>
            <person name="Hang J."/>
            <person name="Wan R."/>
            <person name="Lu G."/>
            <person name="Yan C."/>
            <person name="Shi Y."/>
        </authorList>
    </citation>
    <scope>X-RAY CRYSTALLOGRAPHY (2.95 ANGSTROMS) OF LSM1-LSM7 COMPLEX</scope>
    <scope>SUBUNIT</scope>
    <scope>FUNCTION</scope>
    <scope>RNA-BINDING</scope>
    <scope>MUTAGENESIS OF ARG-63</scope>
</reference>
<reference key="17">
    <citation type="journal article" date="2014" name="Cell Res.">
        <title>Lsm2 and Lsm3 bridge the interaction of the Lsm1-7 complex with Pat1 for decapping activation.</title>
        <authorList>
            <person name="Wu D."/>
            <person name="Muhlrad D."/>
            <person name="Bowler M.W."/>
            <person name="Jiang S."/>
            <person name="Liu Z."/>
            <person name="Parker R."/>
            <person name="Song H."/>
        </authorList>
    </citation>
    <scope>X-RAY CRYSTALLOGRAPHY (3.15 ANGSTROMS)</scope>
    <scope>SUBUNIT</scope>
    <scope>INTERACTION WITH PAT1</scope>
    <scope>FUNCTION</scope>
    <scope>RNA-BINDING</scope>
</reference>
<reference key="18">
    <citation type="journal article" date="2014" name="Nature">
        <title>Crystal structures of the Lsm complex bound to the 3' end sequence of U6 small nuclear RNA.</title>
        <authorList>
            <person name="Zhou L."/>
            <person name="Hang J."/>
            <person name="Zhou Y."/>
            <person name="Wan R."/>
            <person name="Lu G."/>
            <person name="Yin P."/>
            <person name="Yan C."/>
            <person name="Shi Y."/>
        </authorList>
    </citation>
    <scope>X-RAY CRYSTALLOGRAPHY (2.60 ANGSTROMS) OF LSM2-LSM8 COMPLEX</scope>
    <scope>SUBUNIT</scope>
    <scope>FUNCTION</scope>
    <scope>RNA-BINDING</scope>
    <scope>MUTAGENESIS OF PHE-35; ASN-37 AND ARG-63</scope>
</reference>
<reference evidence="19 20" key="19">
    <citation type="journal article" date="2018" name="Nat. Commun.">
        <title>Architecture of the U6 snRNP reveals specific recognition of 3'-end processed U6 snRNA.</title>
        <authorList>
            <person name="Montemayor E.J."/>
            <person name="Didychuk A.L."/>
            <person name="Yake A.D."/>
            <person name="Sidhu G.K."/>
            <person name="Brow D.A."/>
            <person name="Butcher S.E."/>
        </authorList>
    </citation>
    <scope>X-RAY CRYSTALLOGRAPHY (2.71 ANGSTROMS) IN COMPLEX WITH SNR6; PRP24; LSM3; LSM4; LSM5; LSM6; LSM7 AND LSM8</scope>
    <scope>FUNCTION</scope>
    <scope>IDENTIFICATION IN THE U4/U6 SNRNP ASSEMBLY</scope>
    <scope>MUTAGENESIS OF LYS-20</scope>
</reference>
<sequence length="95" mass="11163">MLFFSFFKTLVDQEVVVELKNDIEIKGTLQSVDQFLNLKLDNISCTDEKKYPHLGSVRNIFIRGSTVRYVYLNKNMVDTNLLQDATRREVMTERK</sequence>
<comment type="function">
    <text evidence="2 4 5 6 8 9 10 12 13 14 15 16">Component of LSm protein complexes, which are involved in RNA processing and may function in a chaperone-like manner (PubMed:10747033, PubMed:12077351, PubMed:12438310, PubMed:14627812, PubMed:24513854, PubMed:24247251). Component of the cytoplasmic LSM1-LSM7 complex which is involved in mRNA degradation by activating the decapping step (PubMed:10747033, PubMed:24513854, PubMed:24247251). Together with PAT1, the LSM1-LSM7 complex binds to osmotic stress-activated mRNAs to attenuate the osmotic stress response, probably by limiting ribosome access to the mRNA and consequently translation (PubMed:30059503). Component of the nuclear LSM2-LSM8 complex, which is involved in spliceosome assembly (PubMed:10747033, PubMed:12077351, PubMed:12438310, PubMed:14627812). The LSM2-LSM8 complex plays a role in the biogenesis of the spliceosomal U4/U6-U5 tri-snRNP complex by accelerating PRP24-mediated annealing of U4/U6 di-snRNA (PubMed:10747033, PubMed:24240276, PubMed:29717126). The LSM2-LSM8 complex binds U6 snRNA terminating with a non-cyclic 3' phosphate group (PubMed:29717126). LSM2-LSM8 is probably also involved in degradation of nuclear pre-mRNA by targeting them for decapping (PubMed:15485930). LSM2-LSM8 could be involved in processing of pre-tRNAs, pre-rRNAs and U3 snoRNA, although involvement may be indirect (PubMed:12077351, PubMed:12438310, PubMed:15075370). In a complex that probably contains LSM2-LSM7, but not LSM1 or LSM8, associates with the precursor of the RNA component of RNase P (pre-P RNA) and may be involved in maturing pre-P RNA; the complex also associates with snoRNA SNR5 (PubMed:10369684, PubMed:15075370).</text>
</comment>
<comment type="subunit">
    <text evidence="2 3 4 9 11 12 13 14 15">Component of the heptameric LSM1-LSM7 complex that forms a seven-membered ring structure with a donut shape (PubMed:10747033, PubMed:24139796, PubMed:24513854, PubMed:24247251). The LSm subunits are arranged in the order LSM1, LSM2, LSM3, LSM6, LSM5, LSM7 and LSM4 (PubMed:24139796). Except for LSM1, where a C-terminal helix crosses the ring structure to form additional interactions with LSM3 and LSM6, each subunit interacts only with its two neighboring subunits (PubMed:24139796). The LSM1-LSM7 complex interacts with PAT1; within the complex PAT1 has direct interactions with LSM2 and LSM3 (PubMed:10747033, PubMed:24139796, PubMed:24247251). The LSM1-LSM7 complex interacts with XRN1 (PubMed:10747033). Component of the heptameric LSM2-LSM8 complex that forms a seven-membered ring structure with a donut shape; an RNA strand can pass through the hole in the center of the ring structure (PubMed:10369684, PubMed:10747033, PubMed:24240276). The LSm subunits are arranged in the order LSM8, LSM2, LSM3, LSM6, LSM5, LSM7 and LSM4 (PubMed:24240276). Interacts with U6 snRNA SNR6 and chaperone PRP24; to promote formation of the U4/U6-U5 tri-snRNP (small nuclear ribonucleoprotein) complex, the LSM2-LSM8 complex preferentially binds U6 snRNA that has been modified to contain a non-cyclic 3' phosphate (PubMed:29717126). Component of the spliceosome U4/U6-U5 tri-snRNP complex composed of the U4, U6 and U5 snRNAs and at least PRP3, PRP4, PRP6, PRP8, PRP18, PRP31, PRP38, SNU13, SNU23, SNU66, SNU114, SPP381, SMB1, SMD1, SMD2, SMD3, SMX2, SMX3, LSM2, LSM3, LSM4, LSM5, LSM6, LSM7, LSM8, BRR2 and DIB1 (PubMed:10449419, PubMed:24240276). May be found in a complex comprising LSM2-LSM7 without LSM1 or LSM8; the complex associates with pre-P RNA and snoRNA SNR5 (PubMed:10369684, PubMed:15075370).</text>
</comment>
<comment type="interaction">
    <interactant intactId="EBI-180">
        <id>P38203</id>
    </interactant>
    <interactant intactId="EBI-158">
        <id>P39517</id>
        <label>DHH1</label>
    </interactant>
    <organismsDiffer>false</organismsDiffer>
    <experiments>4</experiments>
</comment>
<comment type="interaction">
    <interactant intactId="EBI-180">
        <id>P38203</id>
    </interactant>
    <interactant intactId="EBI-174">
        <id>P47017</id>
        <label>LSM1</label>
    </interactant>
    <organismsDiffer>false</organismsDiffer>
    <experiments>7</experiments>
</comment>
<comment type="interaction">
    <interactant intactId="EBI-180">
        <id>P38203</id>
    </interactant>
    <interactant intactId="EBI-10227">
        <id>P57743</id>
        <label>LSM3</label>
    </interactant>
    <organismsDiffer>false</organismsDiffer>
    <experiments>8</experiments>
</comment>
<comment type="interaction">
    <interactant intactId="EBI-180">
        <id>P38203</id>
    </interactant>
    <interactant intactId="EBI-188">
        <id>P40070</id>
        <label>LSM4</label>
    </interactant>
    <organismsDiffer>false</organismsDiffer>
    <experiments>7</experiments>
</comment>
<comment type="interaction">
    <interactant intactId="EBI-180">
        <id>P38203</id>
    </interactant>
    <interactant intactId="EBI-10236">
        <id>P40089</id>
        <label>LSM5</label>
    </interactant>
    <organismsDiffer>false</organismsDiffer>
    <experiments>7</experiments>
</comment>
<comment type="interaction">
    <interactant intactId="EBI-180">
        <id>P38203</id>
    </interactant>
    <interactant intactId="EBI-196">
        <id>Q06406</id>
        <label>LSM6</label>
    </interactant>
    <organismsDiffer>false</organismsDiffer>
    <experiments>8</experiments>
</comment>
<comment type="interaction">
    <interactant intactId="EBI-180">
        <id>P38203</id>
    </interactant>
    <interactant intactId="EBI-141">
        <id>P53905</id>
        <label>LSM7</label>
    </interactant>
    <organismsDiffer>false</organismsDiffer>
    <experiments>7</experiments>
</comment>
<comment type="interaction">
    <interactant intactId="EBI-180">
        <id>P38203</id>
    </interactant>
    <interactant intactId="EBI-313">
        <id>P47093</id>
        <label>LSM8</label>
    </interactant>
    <organismsDiffer>false</organismsDiffer>
    <experiments>11</experiments>
</comment>
<comment type="interaction">
    <interactant intactId="EBI-180">
        <id>P38203</id>
    </interactant>
    <interactant intactId="EBI-204">
        <id>P25644</id>
        <label>PAT1</label>
    </interactant>
    <organismsDiffer>false</organismsDiffer>
    <experiments>6</experiments>
</comment>
<comment type="interaction">
    <interactant intactId="EBI-180">
        <id>P38203</id>
    </interactant>
    <interactant intactId="EBI-235">
        <id>Q06217</id>
        <label>SMD2</label>
    </interactant>
    <organismsDiffer>false</organismsDiffer>
    <experiments>4</experiments>
</comment>
<comment type="interaction">
    <interactant intactId="EBI-180">
        <id>P38203</id>
    </interactant>
    <interactant intactId="EBI-9642">
        <id>P22147</id>
        <label>XRN1</label>
    </interactant>
    <organismsDiffer>false</organismsDiffer>
    <experiments>3</experiments>
</comment>
<comment type="subcellular location">
    <subcellularLocation>
        <location evidence="18">Nucleus</location>
        <location evidence="18">Nucleolus</location>
    </subcellularLocation>
    <subcellularLocation>
        <location evidence="18">Cytoplasm</location>
    </subcellularLocation>
</comment>
<comment type="miscellaneous">
    <text evidence="7">Present with 2210 molecules/cell in log phase SD medium.</text>
</comment>
<comment type="similarity">
    <text evidence="17">Belongs to the snRNP Sm proteins family.</text>
</comment>
<proteinExistence type="evidence at protein level"/>
<evidence type="ECO:0000255" key="1">
    <source>
        <dbReference type="PROSITE-ProRule" id="PRU01346"/>
    </source>
</evidence>
<evidence type="ECO:0000269" key="2">
    <source>
    </source>
</evidence>
<evidence type="ECO:0000269" key="3">
    <source>
    </source>
</evidence>
<evidence type="ECO:0000269" key="4">
    <source>
    </source>
</evidence>
<evidence type="ECO:0000269" key="5">
    <source>
    </source>
</evidence>
<evidence type="ECO:0000269" key="6">
    <source>
    </source>
</evidence>
<evidence type="ECO:0000269" key="7">
    <source>
    </source>
</evidence>
<evidence type="ECO:0000269" key="8">
    <source>
    </source>
</evidence>
<evidence type="ECO:0000269" key="9">
    <source>
    </source>
</evidence>
<evidence type="ECO:0000269" key="10">
    <source>
    </source>
</evidence>
<evidence type="ECO:0000269" key="11">
    <source>
    </source>
</evidence>
<evidence type="ECO:0000269" key="12">
    <source>
    </source>
</evidence>
<evidence type="ECO:0000269" key="13">
    <source>
    </source>
</evidence>
<evidence type="ECO:0000269" key="14">
    <source>
    </source>
</evidence>
<evidence type="ECO:0000269" key="15">
    <source>
    </source>
</evidence>
<evidence type="ECO:0000269" key="16">
    <source>
    </source>
</evidence>
<evidence type="ECO:0000305" key="17"/>
<evidence type="ECO:0000305" key="18">
    <source>
    </source>
</evidence>
<evidence type="ECO:0007744" key="19">
    <source>
        <dbReference type="PDB" id="5VSU"/>
    </source>
</evidence>
<evidence type="ECO:0007744" key="20">
    <source>
        <dbReference type="PDB" id="6ASO"/>
    </source>
</evidence>
<evidence type="ECO:0007829" key="21">
    <source>
        <dbReference type="PDB" id="4C92"/>
    </source>
</evidence>
<evidence type="ECO:0007829" key="22">
    <source>
        <dbReference type="PDB" id="4M7D"/>
    </source>
</evidence>
<evidence type="ECO:0007829" key="23">
    <source>
        <dbReference type="PDB" id="6ASO"/>
    </source>
</evidence>
<feature type="chain" id="PRO_0000125559" description="LSM complex subunit LSM2">
    <location>
        <begin position="1"/>
        <end position="95"/>
    </location>
</feature>
<feature type="domain" description="Sm" evidence="1">
    <location>
        <begin position="2"/>
        <end position="76"/>
    </location>
</feature>
<feature type="mutagenesis site" description="Inviable. Decreases binding affinity for U6 snRNA." evidence="15">
    <original>K</original>
    <variation>A</variation>
    <variation>E</variation>
    <location>
        <position position="20"/>
    </location>
</feature>
<feature type="mutagenesis site" description="Strongly reduces affinity for poly-U RNA ends." evidence="12">
    <original>F</original>
    <variation>A</variation>
    <location>
        <position position="35"/>
    </location>
</feature>
<feature type="mutagenesis site" description="Strongly reduces affinity for poly-U RNA ends." evidence="12">
    <original>N</original>
    <variation>A</variation>
    <location>
        <position position="37"/>
    </location>
</feature>
<feature type="mutagenesis site" description="Strongly reduces affinity for poly-U RNA ends." evidence="12 14">
    <original>R</original>
    <variation>A</variation>
    <location>
        <position position="63"/>
    </location>
</feature>
<feature type="helix" evidence="21">
    <location>
        <begin position="2"/>
        <end position="8"/>
    </location>
</feature>
<feature type="turn" evidence="21">
    <location>
        <begin position="9"/>
        <end position="12"/>
    </location>
</feature>
<feature type="strand" evidence="21">
    <location>
        <begin position="13"/>
        <end position="19"/>
    </location>
</feature>
<feature type="turn" evidence="22">
    <location>
        <begin position="20"/>
        <end position="22"/>
    </location>
</feature>
<feature type="strand" evidence="21">
    <location>
        <begin position="24"/>
        <end position="32"/>
    </location>
</feature>
<feature type="strand" evidence="21">
    <location>
        <begin position="38"/>
        <end position="45"/>
    </location>
</feature>
<feature type="strand" evidence="21">
    <location>
        <begin position="49"/>
        <end position="51"/>
    </location>
</feature>
<feature type="strand" evidence="23">
    <location>
        <begin position="54"/>
        <end position="56"/>
    </location>
</feature>
<feature type="strand" evidence="21">
    <location>
        <begin position="60"/>
        <end position="62"/>
    </location>
</feature>
<feature type="helix" evidence="21">
    <location>
        <begin position="64"/>
        <end position="66"/>
    </location>
</feature>
<feature type="strand" evidence="21">
    <location>
        <begin position="67"/>
        <end position="72"/>
    </location>
</feature>
<feature type="helix" evidence="21">
    <location>
        <begin position="74"/>
        <end position="76"/>
    </location>
</feature>
<feature type="helix" evidence="21">
    <location>
        <begin position="79"/>
        <end position="93"/>
    </location>
</feature>
<dbReference type="EMBL" id="X77291">
    <property type="protein sequence ID" value="CAA54505.1"/>
    <property type="molecule type" value="Genomic_DNA"/>
</dbReference>
<dbReference type="EMBL" id="Z35787">
    <property type="protein sequence ID" value="CAA84845.1"/>
    <property type="molecule type" value="Genomic_DNA"/>
</dbReference>
<dbReference type="EMBL" id="BK006936">
    <property type="protein sequence ID" value="DAA07094.1"/>
    <property type="molecule type" value="Genomic_DNA"/>
</dbReference>
<dbReference type="PIR" id="S45760">
    <property type="entry name" value="S45760"/>
</dbReference>
<dbReference type="RefSeq" id="NP_009527.1">
    <property type="nucleotide sequence ID" value="NM_001178266.1"/>
</dbReference>
<dbReference type="PDB" id="3JCM">
    <property type="method" value="EM"/>
    <property type="resolution" value="3.80 A"/>
    <property type="chains" value="c=1-95"/>
</dbReference>
<dbReference type="PDB" id="4C8Q">
    <property type="method" value="X-ray"/>
    <property type="resolution" value="3.70 A"/>
    <property type="chains" value="B=2-95"/>
</dbReference>
<dbReference type="PDB" id="4C92">
    <property type="method" value="X-ray"/>
    <property type="resolution" value="2.30 A"/>
    <property type="chains" value="B=2-95"/>
</dbReference>
<dbReference type="PDB" id="4M75">
    <property type="method" value="X-ray"/>
    <property type="resolution" value="2.95 A"/>
    <property type="chains" value="B/I=1-95"/>
</dbReference>
<dbReference type="PDB" id="4M77">
    <property type="method" value="X-ray"/>
    <property type="resolution" value="3.11 A"/>
    <property type="chains" value="B/I=1-95"/>
</dbReference>
<dbReference type="PDB" id="4M78">
    <property type="method" value="X-ray"/>
    <property type="resolution" value="2.79 A"/>
    <property type="chains" value="B/I=1-95"/>
</dbReference>
<dbReference type="PDB" id="4M7A">
    <property type="method" value="X-ray"/>
    <property type="resolution" value="2.78 A"/>
    <property type="chains" value="B/I=1-95"/>
</dbReference>
<dbReference type="PDB" id="4M7D">
    <property type="method" value="X-ray"/>
    <property type="resolution" value="2.60 A"/>
    <property type="chains" value="B/I=1-95"/>
</dbReference>
<dbReference type="PDB" id="4N0A">
    <property type="method" value="X-ray"/>
    <property type="resolution" value="3.15 A"/>
    <property type="chains" value="C/D/G=1-95"/>
</dbReference>
<dbReference type="PDB" id="5GAN">
    <property type="method" value="EM"/>
    <property type="resolution" value="3.60 A"/>
    <property type="chains" value="2=1-95"/>
</dbReference>
<dbReference type="PDB" id="5NRL">
    <property type="method" value="EM"/>
    <property type="resolution" value="7.20 A"/>
    <property type="chains" value="a=1-95"/>
</dbReference>
<dbReference type="PDB" id="5VSU">
    <property type="method" value="X-ray"/>
    <property type="resolution" value="3.10 A"/>
    <property type="chains" value="B=1-95"/>
</dbReference>
<dbReference type="PDB" id="5ZWM">
    <property type="method" value="EM"/>
    <property type="resolution" value="3.40 A"/>
    <property type="chains" value="q=1-95"/>
</dbReference>
<dbReference type="PDB" id="5ZWO">
    <property type="method" value="EM"/>
    <property type="resolution" value="3.90 A"/>
    <property type="chains" value="q=1-95"/>
</dbReference>
<dbReference type="PDB" id="6ASO">
    <property type="method" value="X-ray"/>
    <property type="resolution" value="2.71 A"/>
    <property type="chains" value="B=1-95"/>
</dbReference>
<dbReference type="PDBsum" id="3JCM"/>
<dbReference type="PDBsum" id="4C8Q"/>
<dbReference type="PDBsum" id="4C92"/>
<dbReference type="PDBsum" id="4M75"/>
<dbReference type="PDBsum" id="4M77"/>
<dbReference type="PDBsum" id="4M78"/>
<dbReference type="PDBsum" id="4M7A"/>
<dbReference type="PDBsum" id="4M7D"/>
<dbReference type="PDBsum" id="4N0A"/>
<dbReference type="PDBsum" id="5GAN"/>
<dbReference type="PDBsum" id="5NRL"/>
<dbReference type="PDBsum" id="5VSU"/>
<dbReference type="PDBsum" id="5ZWM"/>
<dbReference type="PDBsum" id="5ZWO"/>
<dbReference type="PDBsum" id="6ASO"/>
<dbReference type="EMDB" id="EMD-3683"/>
<dbReference type="EMDB" id="EMD-6972"/>
<dbReference type="EMDB" id="EMD-6974"/>
<dbReference type="EMDB" id="EMD-8012"/>
<dbReference type="SMR" id="P38203"/>
<dbReference type="BioGRID" id="32672">
    <property type="interactions" value="389"/>
</dbReference>
<dbReference type="ComplexPortal" id="CPX-112">
    <property type="entry name" value="LSM1-7-PAT1 complex"/>
</dbReference>
<dbReference type="ComplexPortal" id="CPX-24">
    <property type="entry name" value="U6 small nuclear ribonucleoprotein complex"/>
</dbReference>
<dbReference type="ComplexPortal" id="CPX-25">
    <property type="entry name" value="U4/U6.U5 tri-small nuclear ribonucleoprotein complex"/>
</dbReference>
<dbReference type="ComplexPortal" id="CPX-32">
    <property type="entry name" value="U4/U6 small nuclear ribonucleoprotein complex"/>
</dbReference>
<dbReference type="ComplexPortal" id="CPX-44">
    <property type="entry name" value="LSM2-8 complex"/>
</dbReference>
<dbReference type="ComplexPortal" id="CPX-45">
    <property type="entry name" value="LSM1-7 complex"/>
</dbReference>
<dbReference type="ComplexPortal" id="CPX-46">
    <property type="entry name" value="LSM2-7 complex"/>
</dbReference>
<dbReference type="DIP" id="DIP-794N"/>
<dbReference type="FunCoup" id="P38203">
    <property type="interactions" value="1315"/>
</dbReference>
<dbReference type="IntAct" id="P38203">
    <property type="interactions" value="136"/>
</dbReference>
<dbReference type="MINT" id="P38203"/>
<dbReference type="STRING" id="4932.YBL026W"/>
<dbReference type="iPTMnet" id="P38203"/>
<dbReference type="PaxDb" id="4932-YBL026W"/>
<dbReference type="PeptideAtlas" id="P38203"/>
<dbReference type="EnsemblFungi" id="YBL026W_mRNA">
    <property type="protein sequence ID" value="YBL026W"/>
    <property type="gene ID" value="YBL026W"/>
</dbReference>
<dbReference type="GeneID" id="852255"/>
<dbReference type="KEGG" id="sce:YBL026W"/>
<dbReference type="AGR" id="SGD:S000000122"/>
<dbReference type="SGD" id="S000000122">
    <property type="gene designation" value="LSM2"/>
</dbReference>
<dbReference type="VEuPathDB" id="FungiDB:YBL026W"/>
<dbReference type="eggNOG" id="KOG3448">
    <property type="taxonomic scope" value="Eukaryota"/>
</dbReference>
<dbReference type="GeneTree" id="ENSGT00390000016597"/>
<dbReference type="HOGENOM" id="CLU_130474_3_0_1"/>
<dbReference type="InParanoid" id="P38203"/>
<dbReference type="OMA" id="DNISCTD"/>
<dbReference type="OrthoDB" id="10256176at2759"/>
<dbReference type="BioCyc" id="YEAST:G3O-28929-MONOMER"/>
<dbReference type="Reactome" id="R-SCE-430039">
    <property type="pathway name" value="mRNA decay by 5' to 3' exoribonuclease"/>
</dbReference>
<dbReference type="BioGRID-ORCS" id="852255">
    <property type="hits" value="0 hits in 10 CRISPR screens"/>
</dbReference>
<dbReference type="CD-CODE" id="A777E0F8">
    <property type="entry name" value="P-body"/>
</dbReference>
<dbReference type="EvolutionaryTrace" id="P38203"/>
<dbReference type="PRO" id="PR:P38203"/>
<dbReference type="Proteomes" id="UP000002311">
    <property type="component" value="Chromosome II"/>
</dbReference>
<dbReference type="RNAct" id="P38203">
    <property type="molecule type" value="protein"/>
</dbReference>
<dbReference type="GO" id="GO:0071013">
    <property type="term" value="C:catalytic step 2 spliceosome"/>
    <property type="evidence" value="ECO:0000318"/>
    <property type="project" value="GO_Central"/>
</dbReference>
<dbReference type="GO" id="GO:0005737">
    <property type="term" value="C:cytoplasm"/>
    <property type="evidence" value="ECO:0007005"/>
    <property type="project" value="SGD"/>
</dbReference>
<dbReference type="GO" id="GO:1990726">
    <property type="term" value="C:Lsm1-7-Pat1 complex"/>
    <property type="evidence" value="ECO:0000314"/>
    <property type="project" value="SGD"/>
</dbReference>
<dbReference type="GO" id="GO:0005730">
    <property type="term" value="C:nucleolus"/>
    <property type="evidence" value="ECO:0000314"/>
    <property type="project" value="ComplexPortal"/>
</dbReference>
<dbReference type="GO" id="GO:0005634">
    <property type="term" value="C:nucleus"/>
    <property type="evidence" value="ECO:0000314"/>
    <property type="project" value="ComplexPortal"/>
</dbReference>
<dbReference type="GO" id="GO:0000932">
    <property type="term" value="C:P-body"/>
    <property type="evidence" value="ECO:0000314"/>
    <property type="project" value="ComplexPortal"/>
</dbReference>
<dbReference type="GO" id="GO:0071011">
    <property type="term" value="C:precatalytic spliceosome"/>
    <property type="evidence" value="ECO:0000318"/>
    <property type="project" value="GO_Central"/>
</dbReference>
<dbReference type="GO" id="GO:0005732">
    <property type="term" value="C:sno(s)RNA-containing ribonucleoprotein complex"/>
    <property type="evidence" value="ECO:0000353"/>
    <property type="project" value="SGD"/>
</dbReference>
<dbReference type="GO" id="GO:0005681">
    <property type="term" value="C:spliceosomal complex"/>
    <property type="evidence" value="ECO:0000303"/>
    <property type="project" value="ComplexPortal"/>
</dbReference>
<dbReference type="GO" id="GO:0071001">
    <property type="term" value="C:U4/U6 snRNP"/>
    <property type="evidence" value="ECO:0000303"/>
    <property type="project" value="ComplexPortal"/>
</dbReference>
<dbReference type="GO" id="GO:0046540">
    <property type="term" value="C:U4/U6 x U5 tri-snRNP complex"/>
    <property type="evidence" value="ECO:0000314"/>
    <property type="project" value="SGD"/>
</dbReference>
<dbReference type="GO" id="GO:0005688">
    <property type="term" value="C:U6 snRNP"/>
    <property type="evidence" value="ECO:0000314"/>
    <property type="project" value="ComplexPortal"/>
</dbReference>
<dbReference type="GO" id="GO:0003723">
    <property type="term" value="F:RNA binding"/>
    <property type="evidence" value="ECO:0007669"/>
    <property type="project" value="UniProtKB-KW"/>
</dbReference>
<dbReference type="GO" id="GO:0000290">
    <property type="term" value="P:deadenylation-dependent decapping of nuclear-transcribed mRNA"/>
    <property type="evidence" value="ECO:0000315"/>
    <property type="project" value="ComplexPortal"/>
</dbReference>
<dbReference type="GO" id="GO:0000398">
    <property type="term" value="P:mRNA splicing, via spliceosome"/>
    <property type="evidence" value="ECO:0000314"/>
    <property type="project" value="SGD"/>
</dbReference>
<dbReference type="GO" id="GO:0006364">
    <property type="term" value="P:rRNA processing"/>
    <property type="evidence" value="ECO:0000315"/>
    <property type="project" value="ComplexPortal"/>
</dbReference>
<dbReference type="GO" id="GO:0008033">
    <property type="term" value="P:tRNA processing"/>
    <property type="evidence" value="ECO:0000315"/>
    <property type="project" value="ComplexPortal"/>
</dbReference>
<dbReference type="CDD" id="cd01725">
    <property type="entry name" value="LSm2"/>
    <property type="match status" value="1"/>
</dbReference>
<dbReference type="FunFam" id="2.30.30.100:FF:000009">
    <property type="entry name" value="U6 snRNA-associated Sm-like protein LSm2"/>
    <property type="match status" value="1"/>
</dbReference>
<dbReference type="Gene3D" id="2.30.30.100">
    <property type="match status" value="1"/>
</dbReference>
<dbReference type="InterPro" id="IPR010920">
    <property type="entry name" value="LSM_dom_sf"/>
</dbReference>
<dbReference type="InterPro" id="IPR047575">
    <property type="entry name" value="Sm"/>
</dbReference>
<dbReference type="InterPro" id="IPR001163">
    <property type="entry name" value="Sm_dom_euk/arc"/>
</dbReference>
<dbReference type="InterPro" id="IPR016654">
    <property type="entry name" value="U6_snRNA_Lsm2"/>
</dbReference>
<dbReference type="PANTHER" id="PTHR13829">
    <property type="entry name" value="SNRNP CORE PROTEIN FAMILY MEMBER"/>
    <property type="match status" value="1"/>
</dbReference>
<dbReference type="PANTHER" id="PTHR13829:SF2">
    <property type="entry name" value="U6 SNRNA-ASSOCIATED SM-LIKE PROTEIN LSM2"/>
    <property type="match status" value="1"/>
</dbReference>
<dbReference type="Pfam" id="PF01423">
    <property type="entry name" value="LSM"/>
    <property type="match status" value="1"/>
</dbReference>
<dbReference type="PIRSF" id="PIRSF016394">
    <property type="entry name" value="U6_snRNA_Lsm2"/>
    <property type="match status" value="1"/>
</dbReference>
<dbReference type="SMART" id="SM00651">
    <property type="entry name" value="Sm"/>
    <property type="match status" value="1"/>
</dbReference>
<dbReference type="SUPFAM" id="SSF50182">
    <property type="entry name" value="Sm-like ribonucleoproteins"/>
    <property type="match status" value="1"/>
</dbReference>
<dbReference type="PROSITE" id="PS52002">
    <property type="entry name" value="SM"/>
    <property type="match status" value="1"/>
</dbReference>
<name>LSM2_YEAST</name>
<protein>
    <recommendedName>
        <fullName evidence="17">LSM complex subunit LSM2</fullName>
    </recommendedName>
    <alternativeName>
        <fullName>Small nuclear ribonucleoprotein D homolog SNP3</fullName>
    </alternativeName>
</protein>
<accession>P38203</accession>
<accession>D6VPX4</accession>
<organism>
    <name type="scientific">Saccharomyces cerevisiae (strain ATCC 204508 / S288c)</name>
    <name type="common">Baker's yeast</name>
    <dbReference type="NCBI Taxonomy" id="559292"/>
    <lineage>
        <taxon>Eukaryota</taxon>
        <taxon>Fungi</taxon>
        <taxon>Dikarya</taxon>
        <taxon>Ascomycota</taxon>
        <taxon>Saccharomycotina</taxon>
        <taxon>Saccharomycetes</taxon>
        <taxon>Saccharomycetales</taxon>
        <taxon>Saccharomycetaceae</taxon>
        <taxon>Saccharomyces</taxon>
    </lineage>
</organism>